<sequence>MKRERSNILNLRMDELKEALAAINEPQWRAAQLHQWLFSHRAGSFDDMTTLSLPLRRKLAESFYIQQPVTEKHDETMEGSPAGATEKLLIQLPDGERVETVLIPGPNRMTACVSAQAGCLLGCSFCATGQMGFRRNLSSGEITGQVWALSDMLQERNREASISNIVFMGMGEPLLNTANVIEAVLNLSTRKYRFSTSQRKITISTVGITPEIDRLADTGLKTKLAVSLHSAIQEKREALMPQAARQYPLDRLRESLIGYASKTGEPVTLAYMLLKGINDSEMDAKRLIRYASGFFCKINLIDYNPIVNIKFEPVCDGTRERFRDILQDAGLQVTIRKSYGTPINAACGQLAADCTGNSDNL</sequence>
<organism>
    <name type="scientific">Chlorobium luteolum (strain DSM 273 / BCRC 81028 / 2530)</name>
    <name type="common">Pelodictyon luteolum</name>
    <dbReference type="NCBI Taxonomy" id="319225"/>
    <lineage>
        <taxon>Bacteria</taxon>
        <taxon>Pseudomonadati</taxon>
        <taxon>Chlorobiota</taxon>
        <taxon>Chlorobiia</taxon>
        <taxon>Chlorobiales</taxon>
        <taxon>Chlorobiaceae</taxon>
        <taxon>Chlorobium/Pelodictyon group</taxon>
        <taxon>Pelodictyon</taxon>
    </lineage>
</organism>
<gene>
    <name evidence="1" type="primary">rlmN</name>
    <name type="ordered locus">Plut_0951</name>
</gene>
<keyword id="KW-0004">4Fe-4S</keyword>
<keyword id="KW-0963">Cytoplasm</keyword>
<keyword id="KW-1015">Disulfide bond</keyword>
<keyword id="KW-0408">Iron</keyword>
<keyword id="KW-0411">Iron-sulfur</keyword>
<keyword id="KW-0479">Metal-binding</keyword>
<keyword id="KW-0489">Methyltransferase</keyword>
<keyword id="KW-1185">Reference proteome</keyword>
<keyword id="KW-0698">rRNA processing</keyword>
<keyword id="KW-0949">S-adenosyl-L-methionine</keyword>
<keyword id="KW-0808">Transferase</keyword>
<keyword id="KW-0819">tRNA processing</keyword>
<comment type="function">
    <text evidence="1">Specifically methylates position 2 of adenine 2503 in 23S rRNA and position 2 of adenine 37 in tRNAs.</text>
</comment>
<comment type="catalytic activity">
    <reaction evidence="1">
        <text>adenosine(2503) in 23S rRNA + 2 reduced [2Fe-2S]-[ferredoxin] + 2 S-adenosyl-L-methionine = 2-methyladenosine(2503) in 23S rRNA + 5'-deoxyadenosine + L-methionine + 2 oxidized [2Fe-2S]-[ferredoxin] + S-adenosyl-L-homocysteine</text>
        <dbReference type="Rhea" id="RHEA:42916"/>
        <dbReference type="Rhea" id="RHEA-COMP:10000"/>
        <dbReference type="Rhea" id="RHEA-COMP:10001"/>
        <dbReference type="Rhea" id="RHEA-COMP:10152"/>
        <dbReference type="Rhea" id="RHEA-COMP:10282"/>
        <dbReference type="ChEBI" id="CHEBI:17319"/>
        <dbReference type="ChEBI" id="CHEBI:33737"/>
        <dbReference type="ChEBI" id="CHEBI:33738"/>
        <dbReference type="ChEBI" id="CHEBI:57844"/>
        <dbReference type="ChEBI" id="CHEBI:57856"/>
        <dbReference type="ChEBI" id="CHEBI:59789"/>
        <dbReference type="ChEBI" id="CHEBI:74411"/>
        <dbReference type="ChEBI" id="CHEBI:74497"/>
        <dbReference type="EC" id="2.1.1.192"/>
    </reaction>
</comment>
<comment type="catalytic activity">
    <reaction evidence="1">
        <text>adenosine(37) in tRNA + 2 reduced [2Fe-2S]-[ferredoxin] + 2 S-adenosyl-L-methionine = 2-methyladenosine(37) in tRNA + 5'-deoxyadenosine + L-methionine + 2 oxidized [2Fe-2S]-[ferredoxin] + S-adenosyl-L-homocysteine</text>
        <dbReference type="Rhea" id="RHEA:43332"/>
        <dbReference type="Rhea" id="RHEA-COMP:10000"/>
        <dbReference type="Rhea" id="RHEA-COMP:10001"/>
        <dbReference type="Rhea" id="RHEA-COMP:10162"/>
        <dbReference type="Rhea" id="RHEA-COMP:10485"/>
        <dbReference type="ChEBI" id="CHEBI:17319"/>
        <dbReference type="ChEBI" id="CHEBI:33737"/>
        <dbReference type="ChEBI" id="CHEBI:33738"/>
        <dbReference type="ChEBI" id="CHEBI:57844"/>
        <dbReference type="ChEBI" id="CHEBI:57856"/>
        <dbReference type="ChEBI" id="CHEBI:59789"/>
        <dbReference type="ChEBI" id="CHEBI:74411"/>
        <dbReference type="ChEBI" id="CHEBI:74497"/>
        <dbReference type="EC" id="2.1.1.192"/>
    </reaction>
</comment>
<comment type="cofactor">
    <cofactor evidence="1">
        <name>[4Fe-4S] cluster</name>
        <dbReference type="ChEBI" id="CHEBI:49883"/>
    </cofactor>
    <text evidence="1">Binds 1 [4Fe-4S] cluster. The cluster is coordinated with 3 cysteines and an exchangeable S-adenosyl-L-methionine.</text>
</comment>
<comment type="subcellular location">
    <subcellularLocation>
        <location evidence="1">Cytoplasm</location>
    </subcellularLocation>
</comment>
<comment type="miscellaneous">
    <text evidence="1">Reaction proceeds by a ping-pong mechanism involving intermediate methylation of a conserved cysteine residue.</text>
</comment>
<comment type="similarity">
    <text evidence="1">Belongs to the radical SAM superfamily. RlmN family.</text>
</comment>
<feature type="chain" id="PRO_0000350303" description="Probable dual-specificity RNA methyltransferase RlmN">
    <location>
        <begin position="1"/>
        <end position="361"/>
    </location>
</feature>
<feature type="domain" description="Radical SAM core" evidence="2">
    <location>
        <begin position="105"/>
        <end position="342"/>
    </location>
</feature>
<feature type="active site" description="Proton acceptor" evidence="1">
    <location>
        <position position="99"/>
    </location>
</feature>
<feature type="active site" description="S-methylcysteine intermediate" evidence="1">
    <location>
        <position position="347"/>
    </location>
</feature>
<feature type="binding site" evidence="1">
    <location>
        <position position="119"/>
    </location>
    <ligand>
        <name>[4Fe-4S] cluster</name>
        <dbReference type="ChEBI" id="CHEBI:49883"/>
        <note>4Fe-4S-S-AdoMet</note>
    </ligand>
</feature>
<feature type="binding site" evidence="1">
    <location>
        <position position="123"/>
    </location>
    <ligand>
        <name>[4Fe-4S] cluster</name>
        <dbReference type="ChEBI" id="CHEBI:49883"/>
        <note>4Fe-4S-S-AdoMet</note>
    </ligand>
</feature>
<feature type="binding site" evidence="1">
    <location>
        <position position="126"/>
    </location>
    <ligand>
        <name>[4Fe-4S] cluster</name>
        <dbReference type="ChEBI" id="CHEBI:49883"/>
        <note>4Fe-4S-S-AdoMet</note>
    </ligand>
</feature>
<feature type="binding site" evidence="1">
    <location>
        <begin position="171"/>
        <end position="172"/>
    </location>
    <ligand>
        <name>S-adenosyl-L-methionine</name>
        <dbReference type="ChEBI" id="CHEBI:59789"/>
    </ligand>
</feature>
<feature type="binding site" evidence="1">
    <location>
        <position position="204"/>
    </location>
    <ligand>
        <name>S-adenosyl-L-methionine</name>
        <dbReference type="ChEBI" id="CHEBI:59789"/>
    </ligand>
</feature>
<feature type="binding site" evidence="1">
    <location>
        <begin position="227"/>
        <end position="229"/>
    </location>
    <ligand>
        <name>S-adenosyl-L-methionine</name>
        <dbReference type="ChEBI" id="CHEBI:59789"/>
    </ligand>
</feature>
<feature type="binding site" evidence="1">
    <location>
        <position position="304"/>
    </location>
    <ligand>
        <name>S-adenosyl-L-methionine</name>
        <dbReference type="ChEBI" id="CHEBI:59789"/>
    </ligand>
</feature>
<feature type="disulfide bond" description="(transient)" evidence="1">
    <location>
        <begin position="112"/>
        <end position="347"/>
    </location>
</feature>
<evidence type="ECO:0000255" key="1">
    <source>
        <dbReference type="HAMAP-Rule" id="MF_01849"/>
    </source>
</evidence>
<evidence type="ECO:0000255" key="2">
    <source>
        <dbReference type="PROSITE-ProRule" id="PRU01266"/>
    </source>
</evidence>
<reference key="1">
    <citation type="submission" date="2005-08" db="EMBL/GenBank/DDBJ databases">
        <title>Complete sequence of Pelodictyon luteolum DSM 273.</title>
        <authorList>
            <consortium name="US DOE Joint Genome Institute"/>
            <person name="Copeland A."/>
            <person name="Lucas S."/>
            <person name="Lapidus A."/>
            <person name="Barry K."/>
            <person name="Detter J.C."/>
            <person name="Glavina T."/>
            <person name="Hammon N."/>
            <person name="Israni S."/>
            <person name="Pitluck S."/>
            <person name="Bryant D."/>
            <person name="Schmutz J."/>
            <person name="Larimer F."/>
            <person name="Land M."/>
            <person name="Kyrpides N."/>
            <person name="Ivanova N."/>
            <person name="Richardson P."/>
        </authorList>
    </citation>
    <scope>NUCLEOTIDE SEQUENCE [LARGE SCALE GENOMIC DNA]</scope>
    <source>
        <strain>DSM 273 / BCRC 81028 / 2530</strain>
    </source>
</reference>
<proteinExistence type="inferred from homology"/>
<accession>Q3B4B8</accession>
<name>RLMN_CHLL3</name>
<protein>
    <recommendedName>
        <fullName evidence="1">Probable dual-specificity RNA methyltransferase RlmN</fullName>
        <ecNumber evidence="1">2.1.1.192</ecNumber>
    </recommendedName>
    <alternativeName>
        <fullName evidence="1">23S rRNA (adenine(2503)-C(2))-methyltransferase</fullName>
    </alternativeName>
    <alternativeName>
        <fullName evidence="1">23S rRNA m2A2503 methyltransferase</fullName>
    </alternativeName>
    <alternativeName>
        <fullName evidence="1">Ribosomal RNA large subunit methyltransferase N</fullName>
    </alternativeName>
    <alternativeName>
        <fullName evidence="1">tRNA (adenine(37)-C(2))-methyltransferase</fullName>
    </alternativeName>
    <alternativeName>
        <fullName evidence="1">tRNA m2A37 methyltransferase</fullName>
    </alternativeName>
</protein>
<dbReference type="EC" id="2.1.1.192" evidence="1"/>
<dbReference type="EMBL" id="CP000096">
    <property type="protein sequence ID" value="ABB23813.1"/>
    <property type="molecule type" value="Genomic_DNA"/>
</dbReference>
<dbReference type="RefSeq" id="WP_011357687.1">
    <property type="nucleotide sequence ID" value="NC_007512.1"/>
</dbReference>
<dbReference type="SMR" id="Q3B4B8"/>
<dbReference type="STRING" id="319225.Plut_0951"/>
<dbReference type="KEGG" id="plt:Plut_0951"/>
<dbReference type="eggNOG" id="COG0820">
    <property type="taxonomic scope" value="Bacteria"/>
</dbReference>
<dbReference type="HOGENOM" id="CLU_029101_0_0_10"/>
<dbReference type="OrthoDB" id="9793973at2"/>
<dbReference type="Proteomes" id="UP000002709">
    <property type="component" value="Chromosome"/>
</dbReference>
<dbReference type="GO" id="GO:0005737">
    <property type="term" value="C:cytoplasm"/>
    <property type="evidence" value="ECO:0007669"/>
    <property type="project" value="UniProtKB-SubCell"/>
</dbReference>
<dbReference type="GO" id="GO:0051539">
    <property type="term" value="F:4 iron, 4 sulfur cluster binding"/>
    <property type="evidence" value="ECO:0007669"/>
    <property type="project" value="UniProtKB-UniRule"/>
</dbReference>
<dbReference type="GO" id="GO:0046872">
    <property type="term" value="F:metal ion binding"/>
    <property type="evidence" value="ECO:0007669"/>
    <property type="project" value="UniProtKB-KW"/>
</dbReference>
<dbReference type="GO" id="GO:0070040">
    <property type="term" value="F:rRNA (adenine(2503)-C2-)-methyltransferase activity"/>
    <property type="evidence" value="ECO:0007669"/>
    <property type="project" value="UniProtKB-UniRule"/>
</dbReference>
<dbReference type="GO" id="GO:0019843">
    <property type="term" value="F:rRNA binding"/>
    <property type="evidence" value="ECO:0007669"/>
    <property type="project" value="UniProtKB-UniRule"/>
</dbReference>
<dbReference type="GO" id="GO:0002935">
    <property type="term" value="F:tRNA (adenine(37)-C2)-methyltransferase activity"/>
    <property type="evidence" value="ECO:0007669"/>
    <property type="project" value="UniProtKB-UniRule"/>
</dbReference>
<dbReference type="GO" id="GO:0000049">
    <property type="term" value="F:tRNA binding"/>
    <property type="evidence" value="ECO:0007669"/>
    <property type="project" value="UniProtKB-UniRule"/>
</dbReference>
<dbReference type="GO" id="GO:0070475">
    <property type="term" value="P:rRNA base methylation"/>
    <property type="evidence" value="ECO:0007669"/>
    <property type="project" value="UniProtKB-UniRule"/>
</dbReference>
<dbReference type="GO" id="GO:0030488">
    <property type="term" value="P:tRNA methylation"/>
    <property type="evidence" value="ECO:0007669"/>
    <property type="project" value="UniProtKB-UniRule"/>
</dbReference>
<dbReference type="CDD" id="cd01335">
    <property type="entry name" value="Radical_SAM"/>
    <property type="match status" value="1"/>
</dbReference>
<dbReference type="Gene3D" id="1.10.150.530">
    <property type="match status" value="1"/>
</dbReference>
<dbReference type="Gene3D" id="3.20.20.70">
    <property type="entry name" value="Aldolase class I"/>
    <property type="match status" value="1"/>
</dbReference>
<dbReference type="HAMAP" id="MF_01849">
    <property type="entry name" value="RNA_methyltr_RlmN"/>
    <property type="match status" value="1"/>
</dbReference>
<dbReference type="InterPro" id="IPR013785">
    <property type="entry name" value="Aldolase_TIM"/>
</dbReference>
<dbReference type="InterPro" id="IPR040072">
    <property type="entry name" value="Methyltransferase_A"/>
</dbReference>
<dbReference type="InterPro" id="IPR048641">
    <property type="entry name" value="RlmN_N"/>
</dbReference>
<dbReference type="InterPro" id="IPR027492">
    <property type="entry name" value="RNA_MTrfase_RlmN"/>
</dbReference>
<dbReference type="InterPro" id="IPR004383">
    <property type="entry name" value="rRNA_lsu_MTrfase_RlmN/Cfr"/>
</dbReference>
<dbReference type="InterPro" id="IPR007197">
    <property type="entry name" value="rSAM"/>
</dbReference>
<dbReference type="NCBIfam" id="TIGR00048">
    <property type="entry name" value="rRNA_mod_RlmN"/>
    <property type="match status" value="1"/>
</dbReference>
<dbReference type="PANTHER" id="PTHR30544">
    <property type="entry name" value="23S RRNA METHYLTRANSFERASE"/>
    <property type="match status" value="1"/>
</dbReference>
<dbReference type="PANTHER" id="PTHR30544:SF5">
    <property type="entry name" value="RADICAL SAM CORE DOMAIN-CONTAINING PROTEIN"/>
    <property type="match status" value="1"/>
</dbReference>
<dbReference type="Pfam" id="PF04055">
    <property type="entry name" value="Radical_SAM"/>
    <property type="match status" value="1"/>
</dbReference>
<dbReference type="Pfam" id="PF21016">
    <property type="entry name" value="RlmN_N"/>
    <property type="match status" value="1"/>
</dbReference>
<dbReference type="PIRSF" id="PIRSF006004">
    <property type="entry name" value="CHP00048"/>
    <property type="match status" value="1"/>
</dbReference>
<dbReference type="SFLD" id="SFLDF00275">
    <property type="entry name" value="adenosine_C2_methyltransferase"/>
    <property type="match status" value="1"/>
</dbReference>
<dbReference type="SFLD" id="SFLDS00029">
    <property type="entry name" value="Radical_SAM"/>
    <property type="match status" value="1"/>
</dbReference>
<dbReference type="SUPFAM" id="SSF102114">
    <property type="entry name" value="Radical SAM enzymes"/>
    <property type="match status" value="1"/>
</dbReference>
<dbReference type="PROSITE" id="PS51918">
    <property type="entry name" value="RADICAL_SAM"/>
    <property type="match status" value="1"/>
</dbReference>